<gene>
    <name type="ordered locus">BQ2027_MB2023</name>
</gene>
<proteinExistence type="predicted"/>
<dbReference type="EMBL" id="LT708304">
    <property type="protein sequence ID" value="SIU00630.1"/>
    <property type="molecule type" value="Genomic_DNA"/>
</dbReference>
<dbReference type="RefSeq" id="NP_855673.1">
    <property type="nucleotide sequence ID" value="NC_002945.3"/>
</dbReference>
<dbReference type="RefSeq" id="WP_003410042.1">
    <property type="nucleotide sequence ID" value="NC_002945.4"/>
</dbReference>
<dbReference type="SMR" id="P64918"/>
<dbReference type="KEGG" id="mbo:BQ2027_MB2023"/>
<dbReference type="PATRIC" id="fig|233413.5.peg.2222"/>
<dbReference type="Proteomes" id="UP000001419">
    <property type="component" value="Chromosome"/>
</dbReference>
<dbReference type="Gene3D" id="3.50.50.60">
    <property type="entry name" value="FAD/NAD(P)-binding domain"/>
    <property type="match status" value="1"/>
</dbReference>
<dbReference type="InterPro" id="IPR036188">
    <property type="entry name" value="FAD/NAD-bd_sf"/>
</dbReference>
<dbReference type="Pfam" id="PF13450">
    <property type="entry name" value="NAD_binding_8"/>
    <property type="match status" value="1"/>
</dbReference>
<dbReference type="SUPFAM" id="SSF51971">
    <property type="entry name" value="Nucleotide-binding domain"/>
    <property type="match status" value="1"/>
</dbReference>
<reference key="1">
    <citation type="journal article" date="2003" name="Proc. Natl. Acad. Sci. U.S.A.">
        <title>The complete genome sequence of Mycobacterium bovis.</title>
        <authorList>
            <person name="Garnier T."/>
            <person name="Eiglmeier K."/>
            <person name="Camus J.-C."/>
            <person name="Medina N."/>
            <person name="Mansoor H."/>
            <person name="Pryor M."/>
            <person name="Duthoy S."/>
            <person name="Grondin S."/>
            <person name="Lacroix C."/>
            <person name="Monsempe C."/>
            <person name="Simon S."/>
            <person name="Harris B."/>
            <person name="Atkin R."/>
            <person name="Doggett J."/>
            <person name="Mayes R."/>
            <person name="Keating L."/>
            <person name="Wheeler P.R."/>
            <person name="Parkhill J."/>
            <person name="Barrell B.G."/>
            <person name="Cole S.T."/>
            <person name="Gordon S.V."/>
            <person name="Hewinson R.G."/>
        </authorList>
    </citation>
    <scope>NUCLEOTIDE SEQUENCE [LARGE SCALE GENOMIC DNA]</scope>
    <source>
        <strain>ATCC BAA-935 / AF2122/97</strain>
    </source>
</reference>
<reference key="2">
    <citation type="journal article" date="2017" name="Genome Announc.">
        <title>Updated reference genome sequence and annotation of Mycobacterium bovis AF2122/97.</title>
        <authorList>
            <person name="Malone K.M."/>
            <person name="Farrell D."/>
            <person name="Stuber T.P."/>
            <person name="Schubert O.T."/>
            <person name="Aebersold R."/>
            <person name="Robbe-Austerman S."/>
            <person name="Gordon S.V."/>
        </authorList>
    </citation>
    <scope>NUCLEOTIDE SEQUENCE [LARGE SCALE GENOMIC DNA]</scope>
    <scope>GENOME REANNOTATION</scope>
    <source>
        <strain>ATCC BAA-935 / AF2122/97</strain>
    </source>
</reference>
<name>Y2023_MYCBO</name>
<feature type="chain" id="PRO_0000103928" description="Uncharacterized protein Mb2023">
    <location>
        <begin position="1"/>
        <end position="537"/>
    </location>
</feature>
<accession>P64918</accession>
<accession>A0A1R3XZZ4</accession>
<accession>Q10857</accession>
<accession>X2BJU5</accession>
<protein>
    <recommendedName>
        <fullName>Uncharacterized protein Mb2023</fullName>
    </recommendedName>
</protein>
<keyword id="KW-1185">Reference proteome</keyword>
<organism>
    <name type="scientific">Mycobacterium bovis (strain ATCC BAA-935 / AF2122/97)</name>
    <dbReference type="NCBI Taxonomy" id="233413"/>
    <lineage>
        <taxon>Bacteria</taxon>
        <taxon>Bacillati</taxon>
        <taxon>Actinomycetota</taxon>
        <taxon>Actinomycetes</taxon>
        <taxon>Mycobacteriales</taxon>
        <taxon>Mycobacteriaceae</taxon>
        <taxon>Mycobacterium</taxon>
        <taxon>Mycobacterium tuberculosis complex</taxon>
    </lineage>
</organism>
<sequence>MRPGFVGLGFGQWPVYVVRWPKLHLTPRQRKRVLHRRRLLTDRPISLSQIPIRTGGPMNDPWPRPTQGPAKTIETDYLVIGAGAMGMAFTDTLITESGARVVMIDRACQPGGHWTTAYPFVRLHQPSAYYGVNSRALGNNTIDLVGWNQGLNELAPVGEICAYFDAVLQQQLLPTGRVDYFPMSEYLGDGRFRTLAGTEYVVTVNRRIVDATYLRAVVPSMRPAPYSVAPGVDCVAPNELPKLGTRDRYVVVGAGKTGMDVCLWLLRNDVCPDKLTWIMPRDSWLIDRATLQPGPTFVRQFRESYGATLEAIGAATSTDDLFDRLETAGTLLRIDPSVRPSMYRCATVSHLELEQLRRIRDIVRMGHVQRIEPTTIVLDGGSVPATPTALYIDCTADGAPQRPAKPVFDADHLTLQAVRGCQQVFSAAFIAHVEFAYEDDAVKNELCTPIPHPDCDLDWMRLMHSDLGNFQRWLNDPDLTDWLSSARLNLLADLLPPLSHKPRVRERVVSMFQKRLGTAGDQLAKLLDAATATTEQR</sequence>